<protein>
    <recommendedName>
        <fullName>Cyclic AMP-dependent transcription factor ATF-3</fullName>
        <shortName>cAMP-dependent transcription factor ATF-3</shortName>
    </recommendedName>
    <alternativeName>
        <fullName>Activating transcription factor 3</fullName>
    </alternativeName>
    <alternativeName>
        <fullName evidence="7">Transcription factor LRG-21</fullName>
    </alternativeName>
</protein>
<gene>
    <name evidence="6 9" type="primary">Atf3</name>
</gene>
<evidence type="ECO:0000250" key="1">
    <source>
        <dbReference type="UniProtKB" id="P18847"/>
    </source>
</evidence>
<evidence type="ECO:0000255" key="2">
    <source>
        <dbReference type="PROSITE-ProRule" id="PRU00978"/>
    </source>
</evidence>
<evidence type="ECO:0000256" key="3">
    <source>
        <dbReference type="SAM" id="MobiDB-lite"/>
    </source>
</evidence>
<evidence type="ECO:0000269" key="4">
    <source>
    </source>
</evidence>
<evidence type="ECO:0000269" key="5">
    <source>
    </source>
</evidence>
<evidence type="ECO:0000303" key="6">
    <source>
    </source>
</evidence>
<evidence type="ECO:0000303" key="7">
    <source>
    </source>
</evidence>
<evidence type="ECO:0000305" key="8"/>
<evidence type="ECO:0000312" key="9">
    <source>
        <dbReference type="MGI" id="MGI:109384"/>
    </source>
</evidence>
<dbReference type="EMBL" id="U19118">
    <property type="protein sequence ID" value="AAB48941.1"/>
    <property type="molecule type" value="mRNA"/>
</dbReference>
<dbReference type="EMBL" id="BC019946">
    <property type="protein sequence ID" value="AAH19946.1"/>
    <property type="molecule type" value="mRNA"/>
</dbReference>
<dbReference type="EMBL" id="BC064799">
    <property type="protein sequence ID" value="AAH64799.1"/>
    <property type="molecule type" value="mRNA"/>
</dbReference>
<dbReference type="CCDS" id="CCDS15616.1"/>
<dbReference type="RefSeq" id="NP_031524.2">
    <property type="nucleotide sequence ID" value="NM_007498.3"/>
</dbReference>
<dbReference type="SMR" id="Q60765"/>
<dbReference type="BioGRID" id="198234">
    <property type="interactions" value="9"/>
</dbReference>
<dbReference type="FunCoup" id="Q60765">
    <property type="interactions" value="2259"/>
</dbReference>
<dbReference type="IntAct" id="Q60765">
    <property type="interactions" value="1"/>
</dbReference>
<dbReference type="STRING" id="10090.ENSMUSP00000027941"/>
<dbReference type="iPTMnet" id="Q60765"/>
<dbReference type="PhosphoSitePlus" id="Q60765"/>
<dbReference type="PaxDb" id="10090-ENSMUSP00000027941"/>
<dbReference type="ProteomicsDB" id="265174"/>
<dbReference type="Antibodypedia" id="658">
    <property type="antibodies" value="555 antibodies from 37 providers"/>
</dbReference>
<dbReference type="DNASU" id="11910"/>
<dbReference type="Ensembl" id="ENSMUST00000027941.14">
    <property type="protein sequence ID" value="ENSMUSP00000027941.9"/>
    <property type="gene ID" value="ENSMUSG00000026628.14"/>
</dbReference>
<dbReference type="Ensembl" id="ENSMUST00000195117.2">
    <property type="protein sequence ID" value="ENSMUSP00000141492.2"/>
    <property type="gene ID" value="ENSMUSG00000026628.14"/>
</dbReference>
<dbReference type="GeneID" id="11910"/>
<dbReference type="KEGG" id="mmu:11910"/>
<dbReference type="UCSC" id="uc007ece.1">
    <property type="organism name" value="mouse"/>
</dbReference>
<dbReference type="AGR" id="MGI:109384"/>
<dbReference type="CTD" id="467"/>
<dbReference type="MGI" id="MGI:109384">
    <property type="gene designation" value="Atf3"/>
</dbReference>
<dbReference type="VEuPathDB" id="HostDB:ENSMUSG00000026628"/>
<dbReference type="eggNOG" id="KOG1414">
    <property type="taxonomic scope" value="Eukaryota"/>
</dbReference>
<dbReference type="GeneTree" id="ENSGT00940000156376"/>
<dbReference type="HOGENOM" id="CLU_088612_0_2_1"/>
<dbReference type="InParanoid" id="Q60765"/>
<dbReference type="OMA" id="KRECAPQ"/>
<dbReference type="OrthoDB" id="2596881at2759"/>
<dbReference type="PhylomeDB" id="Q60765"/>
<dbReference type="TreeFam" id="TF326301"/>
<dbReference type="BioGRID-ORCS" id="11910">
    <property type="hits" value="1 hit in 79 CRISPR screens"/>
</dbReference>
<dbReference type="PRO" id="PR:Q60765"/>
<dbReference type="Proteomes" id="UP000000589">
    <property type="component" value="Chromosome 1"/>
</dbReference>
<dbReference type="RNAct" id="Q60765">
    <property type="molecule type" value="protein"/>
</dbReference>
<dbReference type="Bgee" id="ENSMUSG00000026628">
    <property type="expression patterns" value="Expressed in endoderm of midgut and 178 other cell types or tissues"/>
</dbReference>
<dbReference type="ExpressionAtlas" id="Q60765">
    <property type="expression patterns" value="baseline and differential"/>
</dbReference>
<dbReference type="GO" id="GO:0005813">
    <property type="term" value="C:centrosome"/>
    <property type="evidence" value="ECO:0007669"/>
    <property type="project" value="Ensembl"/>
</dbReference>
<dbReference type="GO" id="GO:1990622">
    <property type="term" value="C:CHOP-ATF3 complex"/>
    <property type="evidence" value="ECO:0007669"/>
    <property type="project" value="Ensembl"/>
</dbReference>
<dbReference type="GO" id="GO:0036064">
    <property type="term" value="C:ciliary basal body"/>
    <property type="evidence" value="ECO:0007669"/>
    <property type="project" value="Ensembl"/>
</dbReference>
<dbReference type="GO" id="GO:0005794">
    <property type="term" value="C:Golgi apparatus"/>
    <property type="evidence" value="ECO:0007669"/>
    <property type="project" value="Ensembl"/>
</dbReference>
<dbReference type="GO" id="GO:0016604">
    <property type="term" value="C:nuclear body"/>
    <property type="evidence" value="ECO:0007669"/>
    <property type="project" value="Ensembl"/>
</dbReference>
<dbReference type="GO" id="GO:0005730">
    <property type="term" value="C:nucleolus"/>
    <property type="evidence" value="ECO:0007669"/>
    <property type="project" value="Ensembl"/>
</dbReference>
<dbReference type="GO" id="GO:0005654">
    <property type="term" value="C:nucleoplasm"/>
    <property type="evidence" value="ECO:0000304"/>
    <property type="project" value="Reactome"/>
</dbReference>
<dbReference type="GO" id="GO:0005634">
    <property type="term" value="C:nucleus"/>
    <property type="evidence" value="ECO:0000314"/>
    <property type="project" value="ParkinsonsUK-UCL"/>
</dbReference>
<dbReference type="GO" id="GO:0090575">
    <property type="term" value="C:RNA polymerase II transcription regulator complex"/>
    <property type="evidence" value="ECO:0007669"/>
    <property type="project" value="Ensembl"/>
</dbReference>
<dbReference type="GO" id="GO:0003677">
    <property type="term" value="F:DNA binding"/>
    <property type="evidence" value="ECO:0000314"/>
    <property type="project" value="MGI"/>
</dbReference>
<dbReference type="GO" id="GO:0001228">
    <property type="term" value="F:DNA-binding transcription activator activity, RNA polymerase II-specific"/>
    <property type="evidence" value="ECO:0007669"/>
    <property type="project" value="Ensembl"/>
</dbReference>
<dbReference type="GO" id="GO:0001227">
    <property type="term" value="F:DNA-binding transcription repressor activity, RNA polymerase II-specific"/>
    <property type="evidence" value="ECO:0000314"/>
    <property type="project" value="NTNU_SB"/>
</dbReference>
<dbReference type="GO" id="GO:0046982">
    <property type="term" value="F:protein heterodimerization activity"/>
    <property type="evidence" value="ECO:0007669"/>
    <property type="project" value="Ensembl"/>
</dbReference>
<dbReference type="GO" id="GO:0042803">
    <property type="term" value="F:protein homodimerization activity"/>
    <property type="evidence" value="ECO:0007669"/>
    <property type="project" value="Ensembl"/>
</dbReference>
<dbReference type="GO" id="GO:0000978">
    <property type="term" value="F:RNA polymerase II cis-regulatory region sequence-specific DNA binding"/>
    <property type="evidence" value="ECO:0000314"/>
    <property type="project" value="NTNU_SB"/>
</dbReference>
<dbReference type="GO" id="GO:0034198">
    <property type="term" value="P:cellular response to amino acid starvation"/>
    <property type="evidence" value="ECO:0000315"/>
    <property type="project" value="ParkinsonsUK-UCL"/>
</dbReference>
<dbReference type="GO" id="GO:0030968">
    <property type="term" value="P:endoplasmic reticulum unfolded protein response"/>
    <property type="evidence" value="ECO:0000315"/>
    <property type="project" value="ParkinsonsUK-UCL"/>
</dbReference>
<dbReference type="GO" id="GO:0006094">
    <property type="term" value="P:gluconeogenesis"/>
    <property type="evidence" value="ECO:0000314"/>
    <property type="project" value="MGI"/>
</dbReference>
<dbReference type="GO" id="GO:0045892">
    <property type="term" value="P:negative regulation of DNA-templated transcription"/>
    <property type="evidence" value="ECO:0000314"/>
    <property type="project" value="MGI"/>
</dbReference>
<dbReference type="GO" id="GO:0070373">
    <property type="term" value="P:negative regulation of ERK1 and ERK2 cascade"/>
    <property type="evidence" value="ECO:0000315"/>
    <property type="project" value="CACAO"/>
</dbReference>
<dbReference type="GO" id="GO:0000122">
    <property type="term" value="P:negative regulation of transcription by RNA polymerase II"/>
    <property type="evidence" value="ECO:0000314"/>
    <property type="project" value="NTNU_SB"/>
</dbReference>
<dbReference type="GO" id="GO:0008284">
    <property type="term" value="P:positive regulation of cell population proliferation"/>
    <property type="evidence" value="ECO:0007669"/>
    <property type="project" value="Ensembl"/>
</dbReference>
<dbReference type="GO" id="GO:0010628">
    <property type="term" value="P:positive regulation of gene expression"/>
    <property type="evidence" value="ECO:0000315"/>
    <property type="project" value="ParkinsonsUK-UCL"/>
</dbReference>
<dbReference type="GO" id="GO:1903984">
    <property type="term" value="P:positive regulation of TRAIL-activated apoptotic signaling pathway"/>
    <property type="evidence" value="ECO:0007669"/>
    <property type="project" value="Ensembl"/>
</dbReference>
<dbReference type="GO" id="GO:0045944">
    <property type="term" value="P:positive regulation of transcription by RNA polymerase II"/>
    <property type="evidence" value="ECO:0000316"/>
    <property type="project" value="ParkinsonsUK-UCL"/>
</dbReference>
<dbReference type="GO" id="GO:0035914">
    <property type="term" value="P:skeletal muscle cell differentiation"/>
    <property type="evidence" value="ECO:0000315"/>
    <property type="project" value="MGI"/>
</dbReference>
<dbReference type="CDD" id="cd14722">
    <property type="entry name" value="bZIP_ATF3"/>
    <property type="match status" value="1"/>
</dbReference>
<dbReference type="FunFam" id="1.20.5.170:FF:000006">
    <property type="entry name" value="fos-related antigen 2 isoform X1"/>
    <property type="match status" value="1"/>
</dbReference>
<dbReference type="Gene3D" id="1.20.5.170">
    <property type="match status" value="1"/>
</dbReference>
<dbReference type="InterPro" id="IPR000837">
    <property type="entry name" value="AP-1"/>
</dbReference>
<dbReference type="InterPro" id="IPR004827">
    <property type="entry name" value="bZIP"/>
</dbReference>
<dbReference type="InterPro" id="IPR046347">
    <property type="entry name" value="bZIP_sf"/>
</dbReference>
<dbReference type="PANTHER" id="PTHR23351:SF23">
    <property type="entry name" value="CYCLIC AMP-DEPENDENT TRANSCRIPTION FACTOR ATF-3"/>
    <property type="match status" value="1"/>
</dbReference>
<dbReference type="PANTHER" id="PTHR23351">
    <property type="entry name" value="FOS TRANSCRIPTION FACTOR-RELATED"/>
    <property type="match status" value="1"/>
</dbReference>
<dbReference type="Pfam" id="PF00170">
    <property type="entry name" value="bZIP_1"/>
    <property type="match status" value="1"/>
</dbReference>
<dbReference type="PRINTS" id="PR00042">
    <property type="entry name" value="LEUZIPPRFOS"/>
</dbReference>
<dbReference type="SMART" id="SM00338">
    <property type="entry name" value="BRLZ"/>
    <property type="match status" value="1"/>
</dbReference>
<dbReference type="SUPFAM" id="SSF57959">
    <property type="entry name" value="Leucine zipper domain"/>
    <property type="match status" value="1"/>
</dbReference>
<dbReference type="PROSITE" id="PS50217">
    <property type="entry name" value="BZIP"/>
    <property type="match status" value="1"/>
</dbReference>
<dbReference type="PROSITE" id="PS00036">
    <property type="entry name" value="BZIP_BASIC"/>
    <property type="match status" value="1"/>
</dbReference>
<keyword id="KW-0238">DNA-binding</keyword>
<keyword id="KW-1017">Isopeptide bond</keyword>
<keyword id="KW-0539">Nucleus</keyword>
<keyword id="KW-0597">Phosphoprotein</keyword>
<keyword id="KW-1185">Reference proteome</keyword>
<keyword id="KW-0678">Repressor</keyword>
<keyword id="KW-0804">Transcription</keyword>
<keyword id="KW-0805">Transcription regulation</keyword>
<keyword id="KW-0832">Ubl conjugation</keyword>
<organism>
    <name type="scientific">Mus musculus</name>
    <name type="common">Mouse</name>
    <dbReference type="NCBI Taxonomy" id="10090"/>
    <lineage>
        <taxon>Eukaryota</taxon>
        <taxon>Metazoa</taxon>
        <taxon>Chordata</taxon>
        <taxon>Craniata</taxon>
        <taxon>Vertebrata</taxon>
        <taxon>Euteleostomi</taxon>
        <taxon>Mammalia</taxon>
        <taxon>Eutheria</taxon>
        <taxon>Euarchontoglires</taxon>
        <taxon>Glires</taxon>
        <taxon>Rodentia</taxon>
        <taxon>Myomorpha</taxon>
        <taxon>Muroidea</taxon>
        <taxon>Muridae</taxon>
        <taxon>Murinae</taxon>
        <taxon>Mus</taxon>
        <taxon>Mus</taxon>
    </lineage>
</organism>
<name>ATF3_MOUSE</name>
<reference key="1">
    <citation type="journal article" date="1996" name="Mol. Immunol.">
        <title>Identification of a lipopolysaccharide inducible transcription factor in murine macrophages.</title>
        <authorList>
            <person name="Drysdale B.E."/>
            <person name="Howard D.L."/>
            <person name="Johnson R.J."/>
        </authorList>
    </citation>
    <scope>NUCLEOTIDE SEQUENCE [MRNA]</scope>
    <source>
        <strain>BALB/cJ</strain>
        <tissue>Macrophage</tissue>
    </source>
</reference>
<reference key="2">
    <citation type="journal article" date="2004" name="Genome Res.">
        <title>The status, quality, and expansion of the NIH full-length cDNA project: the Mammalian Gene Collection (MGC).</title>
        <authorList>
            <consortium name="The MGC Project Team"/>
        </authorList>
    </citation>
    <scope>NUCLEOTIDE SEQUENCE [LARGE SCALE MRNA]</scope>
    <source>
        <strain>Czech II</strain>
        <tissue>Mammary gland</tissue>
        <tissue>Osteoblast</tissue>
    </source>
</reference>
<reference key="3">
    <citation type="journal article" date="2002" name="J. Biol. Chem.">
        <title>The roles of ATF3 in liver dysfunction and the regulation of phosphoenolpyruvate carboxykinase gene expression.</title>
        <authorList>
            <person name="Allen-Jennings A.E."/>
            <person name="Hartman M.G."/>
            <person name="Kociba G.J."/>
            <person name="Hai T."/>
        </authorList>
    </citation>
    <scope>FUNCTION</scope>
</reference>
<reference key="4">
    <citation type="journal article" date="2011" name="PLoS ONE">
        <title>Stress-induced C/EBP homology protein (CHOP) represses MyoD transcription to delay myoblast differentiation.</title>
        <authorList>
            <person name="Alter J."/>
            <person name="Bengal E."/>
        </authorList>
    </citation>
    <scope>INDUCTION</scope>
</reference>
<comment type="function">
    <text evidence="1 4">This protein binds the cAMP response element (CRE) (consensus: 5'-GTGACGT[AC][AG]-3'), a sequence present in many viral and cellular promoters (PubMed:11916968). Represses transcription from promoters with ATF sites (PubMed:11916968). It may repress transcription by stabilizing the binding of inhibitory cofactors at the promoter (By similarity).</text>
</comment>
<comment type="subunit">
    <text evidence="1">Binds DNA as a homodimer or a heterodimer. Interacts with KAT5; promoting KAT5 autoacetylation and KAT5 deubiquitination by USP7.</text>
</comment>
<comment type="subcellular location">
    <subcellularLocation>
        <location evidence="1 2">Nucleus</location>
    </subcellularLocation>
</comment>
<comment type="induction">
    <text evidence="5">By stress.</text>
</comment>
<comment type="similarity">
    <text evidence="8">Belongs to the bZIP family. ATF subfamily.</text>
</comment>
<feature type="chain" id="PRO_0000076582" description="Cyclic AMP-dependent transcription factor ATF-3">
    <location>
        <begin position="1"/>
        <end position="181"/>
    </location>
</feature>
<feature type="domain" description="bZIP" evidence="2">
    <location>
        <begin position="86"/>
        <end position="149"/>
    </location>
</feature>
<feature type="region of interest" description="Disordered" evidence="3">
    <location>
        <begin position="73"/>
        <end position="97"/>
    </location>
</feature>
<feature type="region of interest" description="Basic motif" evidence="2">
    <location>
        <begin position="88"/>
        <end position="110"/>
    </location>
</feature>
<feature type="region of interest" description="Leucine-zipper" evidence="2">
    <location>
        <begin position="114"/>
        <end position="142"/>
    </location>
</feature>
<feature type="modified residue" description="Phosphothreonine" evidence="1">
    <location>
        <position position="162"/>
    </location>
</feature>
<feature type="cross-link" description="Glycyl lysine isopeptide (Lys-Gly) (interchain with G-Cter in SUMO2)" evidence="1">
    <location>
        <position position="78"/>
    </location>
</feature>
<feature type="cross-link" description="Glycyl lysine isopeptide (Lys-Gly) (interchain with G-Cter in SUMO2)" evidence="1">
    <location>
        <position position="175"/>
    </location>
</feature>
<sequence>MMLQHPGQVSASEVSATAIVPCLSPPGSLVFEDFANLTPFVKEELRFAIQNKHLCHRMSSALESVTVNNRPLEMSVTKSEAAPEEDERKRRRRERNKIAAAKCRNKKKEKTECLQKESEKLESVNAELKAQIEELKNEKQHLIYMLNLHRPTCIVRAQNGRTPEDERNLFIQQIKEGTLQS</sequence>
<accession>Q60765</accession>
<proteinExistence type="evidence at transcript level"/>